<proteinExistence type="predicted"/>
<accession>P41463</accession>
<feature type="chain" id="PRO_0000132996" description="Uncharacterized 8.2 kDa protein in LEF8-FP intergenic region">
    <location>
        <begin position="1"/>
        <end position="69"/>
    </location>
</feature>
<protein>
    <recommendedName>
        <fullName>Uncharacterized 8.2 kDa protein in LEF8-FP intergenic region</fullName>
    </recommendedName>
</protein>
<name>Y059_NPVAC</name>
<dbReference type="EMBL" id="L22858">
    <property type="protein sequence ID" value="AAA66689.1"/>
    <property type="molecule type" value="Genomic_DNA"/>
</dbReference>
<dbReference type="PIR" id="D72857">
    <property type="entry name" value="D72857"/>
</dbReference>
<dbReference type="RefSeq" id="NP_054089.1">
    <property type="nucleotide sequence ID" value="NC_001623.1"/>
</dbReference>
<dbReference type="SMR" id="P41463"/>
<dbReference type="GeneID" id="1403892"/>
<dbReference type="KEGG" id="vg:1403892"/>
<dbReference type="OrthoDB" id="20410at10239"/>
<dbReference type="Proteomes" id="UP000008292">
    <property type="component" value="Segment"/>
</dbReference>
<dbReference type="InterPro" id="IPR009317">
    <property type="entry name" value="ChaB"/>
</dbReference>
<dbReference type="InterPro" id="IPR037205">
    <property type="entry name" value="ChaB_sf"/>
</dbReference>
<dbReference type="Pfam" id="PF06150">
    <property type="entry name" value="ChaB"/>
    <property type="match status" value="1"/>
</dbReference>
<dbReference type="SUPFAM" id="SSF140376">
    <property type="entry name" value="ChaB-like"/>
    <property type="match status" value="1"/>
</dbReference>
<keyword id="KW-1185">Reference proteome</keyword>
<reference key="1">
    <citation type="journal article" date="1994" name="Virology">
        <title>The complete DNA sequence of Autographa californica nuclear polyhedrosis virus.</title>
        <authorList>
            <person name="Ayres M.D."/>
            <person name="Howard S.C."/>
            <person name="Kuzio J."/>
            <person name="Lopez-Ferber M."/>
            <person name="Possee R.D."/>
        </authorList>
    </citation>
    <scope>NUCLEOTIDE SEQUENCE [LARGE SCALE GENOMIC DNA]</scope>
    <source>
        <strain>C6</strain>
    </source>
</reference>
<organismHost>
    <name type="scientific">Lepidoptera</name>
    <name type="common">butterflies and moths</name>
    <dbReference type="NCBI Taxonomy" id="7088"/>
</organismHost>
<sequence>MYQIPDMLYNEKMPPRAKKLFVETFTKYHKMNGGDEDIAMHKARKALEEKYVKIDTLQNLGFRAKPPTR</sequence>
<organism>
    <name type="scientific">Autographa californica nuclear polyhedrosis virus</name>
    <name type="common">AcMNPV</name>
    <dbReference type="NCBI Taxonomy" id="46015"/>
    <lineage>
        <taxon>Viruses</taxon>
        <taxon>Viruses incertae sedis</taxon>
        <taxon>Naldaviricetes</taxon>
        <taxon>Lefavirales</taxon>
        <taxon>Baculoviridae</taxon>
        <taxon>Alphabaculovirus</taxon>
        <taxon>Alphabaculovirus aucalifornicae</taxon>
    </lineage>
</organism>